<keyword id="KW-0687">Ribonucleoprotein</keyword>
<keyword id="KW-0689">Ribosomal protein</keyword>
<protein>
    <recommendedName>
        <fullName evidence="1">Large ribosomal subunit protein bL34</fullName>
    </recommendedName>
    <alternativeName>
        <fullName evidence="2">50S ribosomal protein L34</fullName>
    </alternativeName>
</protein>
<organism>
    <name type="scientific">Salmonella heidelberg (strain SL476)</name>
    <dbReference type="NCBI Taxonomy" id="454169"/>
    <lineage>
        <taxon>Bacteria</taxon>
        <taxon>Pseudomonadati</taxon>
        <taxon>Pseudomonadota</taxon>
        <taxon>Gammaproteobacteria</taxon>
        <taxon>Enterobacterales</taxon>
        <taxon>Enterobacteriaceae</taxon>
        <taxon>Salmonella</taxon>
    </lineage>
</organism>
<accession>B4TAV0</accession>
<reference key="1">
    <citation type="journal article" date="2011" name="J. Bacteriol.">
        <title>Comparative genomics of 28 Salmonella enterica isolates: evidence for CRISPR-mediated adaptive sublineage evolution.</title>
        <authorList>
            <person name="Fricke W.F."/>
            <person name="Mammel M.K."/>
            <person name="McDermott P.F."/>
            <person name="Tartera C."/>
            <person name="White D.G."/>
            <person name="Leclerc J.E."/>
            <person name="Ravel J."/>
            <person name="Cebula T.A."/>
        </authorList>
    </citation>
    <scope>NUCLEOTIDE SEQUENCE [LARGE SCALE GENOMIC DNA]</scope>
    <source>
        <strain>SL476</strain>
    </source>
</reference>
<evidence type="ECO:0000255" key="1">
    <source>
        <dbReference type="HAMAP-Rule" id="MF_00391"/>
    </source>
</evidence>
<evidence type="ECO:0000305" key="2"/>
<dbReference type="EMBL" id="CP001120">
    <property type="protein sequence ID" value="ACF67584.1"/>
    <property type="molecule type" value="Genomic_DNA"/>
</dbReference>
<dbReference type="RefSeq" id="WP_000831330.1">
    <property type="nucleotide sequence ID" value="NC_011083.1"/>
</dbReference>
<dbReference type="SMR" id="B4TAV0"/>
<dbReference type="GeneID" id="98190980"/>
<dbReference type="KEGG" id="seh:SeHA_C4174"/>
<dbReference type="HOGENOM" id="CLU_129938_2_1_6"/>
<dbReference type="Proteomes" id="UP000001866">
    <property type="component" value="Chromosome"/>
</dbReference>
<dbReference type="GO" id="GO:1990904">
    <property type="term" value="C:ribonucleoprotein complex"/>
    <property type="evidence" value="ECO:0007669"/>
    <property type="project" value="UniProtKB-KW"/>
</dbReference>
<dbReference type="GO" id="GO:0005840">
    <property type="term" value="C:ribosome"/>
    <property type="evidence" value="ECO:0007669"/>
    <property type="project" value="UniProtKB-KW"/>
</dbReference>
<dbReference type="GO" id="GO:0003735">
    <property type="term" value="F:structural constituent of ribosome"/>
    <property type="evidence" value="ECO:0007669"/>
    <property type="project" value="InterPro"/>
</dbReference>
<dbReference type="GO" id="GO:0006412">
    <property type="term" value="P:translation"/>
    <property type="evidence" value="ECO:0007669"/>
    <property type="project" value="UniProtKB-UniRule"/>
</dbReference>
<dbReference type="FunFam" id="1.10.287.3980:FF:000001">
    <property type="entry name" value="Mitochondrial ribosomal protein L34"/>
    <property type="match status" value="1"/>
</dbReference>
<dbReference type="Gene3D" id="1.10.287.3980">
    <property type="match status" value="1"/>
</dbReference>
<dbReference type="HAMAP" id="MF_00391">
    <property type="entry name" value="Ribosomal_bL34"/>
    <property type="match status" value="1"/>
</dbReference>
<dbReference type="InterPro" id="IPR000271">
    <property type="entry name" value="Ribosomal_bL34"/>
</dbReference>
<dbReference type="InterPro" id="IPR020939">
    <property type="entry name" value="Ribosomal_bL34_CS"/>
</dbReference>
<dbReference type="NCBIfam" id="TIGR01030">
    <property type="entry name" value="rpmH_bact"/>
    <property type="match status" value="1"/>
</dbReference>
<dbReference type="PANTHER" id="PTHR14503:SF4">
    <property type="entry name" value="LARGE RIBOSOMAL SUBUNIT PROTEIN BL34M"/>
    <property type="match status" value="1"/>
</dbReference>
<dbReference type="PANTHER" id="PTHR14503">
    <property type="entry name" value="MITOCHONDRIAL RIBOSOMAL PROTEIN 34 FAMILY MEMBER"/>
    <property type="match status" value="1"/>
</dbReference>
<dbReference type="Pfam" id="PF00468">
    <property type="entry name" value="Ribosomal_L34"/>
    <property type="match status" value="1"/>
</dbReference>
<dbReference type="PROSITE" id="PS00784">
    <property type="entry name" value="RIBOSOMAL_L34"/>
    <property type="match status" value="1"/>
</dbReference>
<proteinExistence type="inferred from homology"/>
<feature type="chain" id="PRO_1000196103" description="Large ribosomal subunit protein bL34">
    <location>
        <begin position="1"/>
        <end position="46"/>
    </location>
</feature>
<name>RL34_SALHS</name>
<gene>
    <name evidence="1" type="primary">rpmH</name>
    <name type="ordered locus">SeHA_C4174</name>
</gene>
<sequence length="46" mass="5380">MKRTFQPSVLKRNRSHGFRARMATKNGRQVLARRRAKGRARLTVSK</sequence>
<comment type="similarity">
    <text evidence="1">Belongs to the bacterial ribosomal protein bL34 family.</text>
</comment>